<keyword id="KW-0963">Cytoplasm</keyword>
<keyword id="KW-0489">Methyltransferase</keyword>
<keyword id="KW-0698">rRNA processing</keyword>
<keyword id="KW-0949">S-adenosyl-L-methionine</keyword>
<keyword id="KW-0808">Transferase</keyword>
<sequence length="256" mass="27595">MSHVSICLLSEAGADPGALSILADRWGLVSDDQAVMALVLTAERLELRKRDEPKLGGIYVDFVSGTQAHRRKFGGGRGEAVAKAVGIKKGYLPRVVDATAGLGRDAFVLAALGCQVQMLERNPVVAALLDDGLRRGYLDAEIGPWLRERLTLLHASSLTALVAIEPRPEVVYLDPMYPHRQKSALVKKEMRVFQSLVGADNDADGLLAPARALATKRVVVKRPDYAEPLAGVAAQAAVVTKSHRFDIYPSSVTPPR</sequence>
<feature type="chain" id="PRO_0000212100" description="Ribosomal RNA small subunit methyltransferase J">
    <location>
        <begin position="1"/>
        <end position="256"/>
    </location>
</feature>
<feature type="binding site" evidence="1">
    <location>
        <begin position="104"/>
        <end position="105"/>
    </location>
    <ligand>
        <name>S-adenosyl-L-methionine</name>
        <dbReference type="ChEBI" id="CHEBI:59789"/>
    </ligand>
</feature>
<feature type="binding site" evidence="1">
    <location>
        <begin position="120"/>
        <end position="121"/>
    </location>
    <ligand>
        <name>S-adenosyl-L-methionine</name>
        <dbReference type="ChEBI" id="CHEBI:59789"/>
    </ligand>
</feature>
<feature type="binding site" evidence="1">
    <location>
        <begin position="156"/>
        <end position="157"/>
    </location>
    <ligand>
        <name>S-adenosyl-L-methionine</name>
        <dbReference type="ChEBI" id="CHEBI:59789"/>
    </ligand>
</feature>
<feature type="binding site" evidence="1">
    <location>
        <position position="174"/>
    </location>
    <ligand>
        <name>S-adenosyl-L-methionine</name>
        <dbReference type="ChEBI" id="CHEBI:59789"/>
    </ligand>
</feature>
<accession>Q664F4</accession>
<comment type="function">
    <text evidence="1">Specifically methylates the guanosine in position 1516 of 16S rRNA.</text>
</comment>
<comment type="catalytic activity">
    <reaction evidence="1">
        <text>guanosine(1516) in 16S rRNA + S-adenosyl-L-methionine = N(2)-methylguanosine(1516) in 16S rRNA + S-adenosyl-L-homocysteine + H(+)</text>
        <dbReference type="Rhea" id="RHEA:43220"/>
        <dbReference type="Rhea" id="RHEA-COMP:10412"/>
        <dbReference type="Rhea" id="RHEA-COMP:10413"/>
        <dbReference type="ChEBI" id="CHEBI:15378"/>
        <dbReference type="ChEBI" id="CHEBI:57856"/>
        <dbReference type="ChEBI" id="CHEBI:59789"/>
        <dbReference type="ChEBI" id="CHEBI:74269"/>
        <dbReference type="ChEBI" id="CHEBI:74481"/>
        <dbReference type="EC" id="2.1.1.242"/>
    </reaction>
</comment>
<comment type="subcellular location">
    <subcellularLocation>
        <location evidence="1">Cytoplasm</location>
    </subcellularLocation>
</comment>
<comment type="similarity">
    <text evidence="1">Belongs to the methyltransferase superfamily. RsmJ family.</text>
</comment>
<proteinExistence type="inferred from homology"/>
<name>RSMJ_YERPS</name>
<reference key="1">
    <citation type="journal article" date="2004" name="Proc. Natl. Acad. Sci. U.S.A.">
        <title>Insights into the evolution of Yersinia pestis through whole-genome comparison with Yersinia pseudotuberculosis.</title>
        <authorList>
            <person name="Chain P.S.G."/>
            <person name="Carniel E."/>
            <person name="Larimer F.W."/>
            <person name="Lamerdin J."/>
            <person name="Stoutland P.O."/>
            <person name="Regala W.M."/>
            <person name="Georgescu A.M."/>
            <person name="Vergez L.M."/>
            <person name="Land M.L."/>
            <person name="Motin V.L."/>
            <person name="Brubaker R.R."/>
            <person name="Fowler J."/>
            <person name="Hinnebusch J."/>
            <person name="Marceau M."/>
            <person name="Medigue C."/>
            <person name="Simonet M."/>
            <person name="Chenal-Francisque V."/>
            <person name="Souza B."/>
            <person name="Dacheux D."/>
            <person name="Elliott J.M."/>
            <person name="Derbise A."/>
            <person name="Hauser L.J."/>
            <person name="Garcia E."/>
        </authorList>
    </citation>
    <scope>NUCLEOTIDE SEQUENCE [LARGE SCALE GENOMIC DNA]</scope>
    <source>
        <strain>IP32953</strain>
    </source>
</reference>
<evidence type="ECO:0000255" key="1">
    <source>
        <dbReference type="HAMAP-Rule" id="MF_01523"/>
    </source>
</evidence>
<organism>
    <name type="scientific">Yersinia pseudotuberculosis serotype I (strain IP32953)</name>
    <dbReference type="NCBI Taxonomy" id="273123"/>
    <lineage>
        <taxon>Bacteria</taxon>
        <taxon>Pseudomonadati</taxon>
        <taxon>Pseudomonadota</taxon>
        <taxon>Gammaproteobacteria</taxon>
        <taxon>Enterobacterales</taxon>
        <taxon>Yersiniaceae</taxon>
        <taxon>Yersinia</taxon>
    </lineage>
</organism>
<protein>
    <recommendedName>
        <fullName evidence="1">Ribosomal RNA small subunit methyltransferase J</fullName>
        <ecNumber evidence="1">2.1.1.242</ecNumber>
    </recommendedName>
    <alternativeName>
        <fullName evidence="1">16S rRNA m2G1516 methyltransferase</fullName>
    </alternativeName>
    <alternativeName>
        <fullName evidence="1">rRNA (guanine-N(2)-)-methyltransferase</fullName>
    </alternativeName>
</protein>
<dbReference type="EC" id="2.1.1.242" evidence="1"/>
<dbReference type="EMBL" id="BX936398">
    <property type="protein sequence ID" value="CAH23053.1"/>
    <property type="molecule type" value="Genomic_DNA"/>
</dbReference>
<dbReference type="RefSeq" id="WP_002215483.1">
    <property type="nucleotide sequence ID" value="NZ_CP009712.1"/>
</dbReference>
<dbReference type="SMR" id="Q664F4"/>
<dbReference type="GeneID" id="96663312"/>
<dbReference type="KEGG" id="ypo:BZ17_2770"/>
<dbReference type="KEGG" id="yps:YPTB3815"/>
<dbReference type="PATRIC" id="fig|273123.14.peg.2904"/>
<dbReference type="Proteomes" id="UP000001011">
    <property type="component" value="Chromosome"/>
</dbReference>
<dbReference type="GO" id="GO:0005737">
    <property type="term" value="C:cytoplasm"/>
    <property type="evidence" value="ECO:0007669"/>
    <property type="project" value="UniProtKB-SubCell"/>
</dbReference>
<dbReference type="GO" id="GO:0008990">
    <property type="term" value="F:rRNA (guanine-N2-)-methyltransferase activity"/>
    <property type="evidence" value="ECO:0007669"/>
    <property type="project" value="UniProtKB-UniRule"/>
</dbReference>
<dbReference type="CDD" id="cd02440">
    <property type="entry name" value="AdoMet_MTases"/>
    <property type="match status" value="1"/>
</dbReference>
<dbReference type="Gene3D" id="3.40.50.150">
    <property type="entry name" value="Vaccinia Virus protein VP39"/>
    <property type="match status" value="1"/>
</dbReference>
<dbReference type="Gene3D" id="3.40.1630.10">
    <property type="entry name" value="YhiQ-like domain"/>
    <property type="match status" value="1"/>
</dbReference>
<dbReference type="HAMAP" id="MF_01523">
    <property type="entry name" value="16SrRNA_methyltr_J"/>
    <property type="match status" value="1"/>
</dbReference>
<dbReference type="InterPro" id="IPR007536">
    <property type="entry name" value="16SrRNA_methylTrfase_J"/>
</dbReference>
<dbReference type="InterPro" id="IPR029063">
    <property type="entry name" value="SAM-dependent_MTases_sf"/>
</dbReference>
<dbReference type="NCBIfam" id="NF008012">
    <property type="entry name" value="PRK10742.1"/>
    <property type="match status" value="1"/>
</dbReference>
<dbReference type="PANTHER" id="PTHR36112">
    <property type="entry name" value="RIBOSOMAL RNA SMALL SUBUNIT METHYLTRANSFERASE J"/>
    <property type="match status" value="1"/>
</dbReference>
<dbReference type="PANTHER" id="PTHR36112:SF1">
    <property type="entry name" value="RIBOSOMAL RNA SMALL SUBUNIT METHYLTRANSFERASE J"/>
    <property type="match status" value="1"/>
</dbReference>
<dbReference type="Pfam" id="PF04445">
    <property type="entry name" value="SAM_MT"/>
    <property type="match status" value="1"/>
</dbReference>
<dbReference type="SUPFAM" id="SSF53335">
    <property type="entry name" value="S-adenosyl-L-methionine-dependent methyltransferases"/>
    <property type="match status" value="1"/>
</dbReference>
<gene>
    <name evidence="1" type="primary">rsmJ</name>
    <name type="ordered locus">YPTB3815</name>
</gene>